<comment type="function">
    <text evidence="1">ATPase subunit of a proteasome-like degradation complex; this subunit has chaperone activity. The binding of ATP and its subsequent hydrolysis by HslU are essential for unfolding of protein substrates subsequently hydrolyzed by HslV. HslU recognizes the N-terminal part of its protein substrates and unfolds these before they are guided to HslV for hydrolysis.</text>
</comment>
<comment type="subunit">
    <text evidence="1">A double ring-shaped homohexamer of HslV is capped on each side by a ring-shaped HslU homohexamer. The assembly of the HslU/HslV complex is dependent on binding of ATP.</text>
</comment>
<comment type="subcellular location">
    <subcellularLocation>
        <location evidence="1">Cytoplasm</location>
    </subcellularLocation>
</comment>
<comment type="similarity">
    <text evidence="1">Belongs to the ClpX chaperone family. HslU subfamily.</text>
</comment>
<organism>
    <name type="scientific">Campylobacter jejuni subsp. doylei (strain ATCC BAA-1458 / RM4099 / 269.97)</name>
    <dbReference type="NCBI Taxonomy" id="360109"/>
    <lineage>
        <taxon>Bacteria</taxon>
        <taxon>Pseudomonadati</taxon>
        <taxon>Campylobacterota</taxon>
        <taxon>Epsilonproteobacteria</taxon>
        <taxon>Campylobacterales</taxon>
        <taxon>Campylobacteraceae</taxon>
        <taxon>Campylobacter</taxon>
    </lineage>
</organism>
<name>HSLU_CAMJD</name>
<proteinExistence type="inferred from homology"/>
<feature type="chain" id="PRO_1000012725" description="ATP-dependent protease ATPase subunit HslU">
    <location>
        <begin position="1"/>
        <end position="439"/>
    </location>
</feature>
<feature type="binding site" evidence="1">
    <location>
        <position position="17"/>
    </location>
    <ligand>
        <name>ATP</name>
        <dbReference type="ChEBI" id="CHEBI:30616"/>
    </ligand>
</feature>
<feature type="binding site" evidence="1">
    <location>
        <begin position="59"/>
        <end position="64"/>
    </location>
    <ligand>
        <name>ATP</name>
        <dbReference type="ChEBI" id="CHEBI:30616"/>
    </ligand>
</feature>
<feature type="binding site" evidence="1">
    <location>
        <position position="251"/>
    </location>
    <ligand>
        <name>ATP</name>
        <dbReference type="ChEBI" id="CHEBI:30616"/>
    </ligand>
</feature>
<feature type="binding site" evidence="1">
    <location>
        <position position="317"/>
    </location>
    <ligand>
        <name>ATP</name>
        <dbReference type="ChEBI" id="CHEBI:30616"/>
    </ligand>
</feature>
<feature type="binding site" evidence="1">
    <location>
        <position position="389"/>
    </location>
    <ligand>
        <name>ATP</name>
        <dbReference type="ChEBI" id="CHEBI:30616"/>
    </ligand>
</feature>
<keyword id="KW-0067">ATP-binding</keyword>
<keyword id="KW-0143">Chaperone</keyword>
<keyword id="KW-0963">Cytoplasm</keyword>
<keyword id="KW-0547">Nucleotide-binding</keyword>
<keyword id="KW-0346">Stress response</keyword>
<evidence type="ECO:0000255" key="1">
    <source>
        <dbReference type="HAMAP-Rule" id="MF_00249"/>
    </source>
</evidence>
<sequence length="439" mass="49844">MNLTPKEIVKFLDDYVIGQKKAKKIIAIALRNRYRRMQLSPELQDDIVPKNILMIGSTGVGKTEIARRLAKMMGFPFIKIEASKYTEVGFVGRDVESMVRDLTNAALNLVKNEQREKNKDKINEFIENKILEKLLPPLPKGISDEKQEEYKNSLEKMRTKLRNGDLDESTIEIEISQNMFDTNPNLPPEMGAMQDIVKVIGVGSKKVKKEMKIKDAKNALKNEAGEKILDQESIKSEALKRSENEGIIFIDEIDKIAVSSGNSNRQDPSKEGVQRDLLPIVEGSNVQTKIGTLKTDHILFIAAGAFHLSKPSDLIPELQGRFPLRVELDSLDDKAFYEILTRPKNSLLKQYSQLLKTENLELDFDNEAIKEIAKIASRANEEMQDIGARRLHTVIEKLLEDLSFEADEYAGKKFVVDKKMVEEKLGDIIENKDLARYIL</sequence>
<protein>
    <recommendedName>
        <fullName evidence="1">ATP-dependent protease ATPase subunit HslU</fullName>
    </recommendedName>
    <alternativeName>
        <fullName evidence="1">Unfoldase HslU</fullName>
    </alternativeName>
</protein>
<dbReference type="EMBL" id="CP000768">
    <property type="protein sequence ID" value="ABS43526.1"/>
    <property type="molecule type" value="Genomic_DNA"/>
</dbReference>
<dbReference type="SMR" id="A7H4F2"/>
<dbReference type="KEGG" id="cjd:JJD26997_1337"/>
<dbReference type="HOGENOM" id="CLU_033123_0_0_7"/>
<dbReference type="Proteomes" id="UP000002302">
    <property type="component" value="Chromosome"/>
</dbReference>
<dbReference type="GO" id="GO:0009376">
    <property type="term" value="C:HslUV protease complex"/>
    <property type="evidence" value="ECO:0007669"/>
    <property type="project" value="UniProtKB-UniRule"/>
</dbReference>
<dbReference type="GO" id="GO:0005524">
    <property type="term" value="F:ATP binding"/>
    <property type="evidence" value="ECO:0007669"/>
    <property type="project" value="UniProtKB-UniRule"/>
</dbReference>
<dbReference type="GO" id="GO:0016887">
    <property type="term" value="F:ATP hydrolysis activity"/>
    <property type="evidence" value="ECO:0007669"/>
    <property type="project" value="InterPro"/>
</dbReference>
<dbReference type="GO" id="GO:0008233">
    <property type="term" value="F:peptidase activity"/>
    <property type="evidence" value="ECO:0007669"/>
    <property type="project" value="InterPro"/>
</dbReference>
<dbReference type="GO" id="GO:0036402">
    <property type="term" value="F:proteasome-activating activity"/>
    <property type="evidence" value="ECO:0007669"/>
    <property type="project" value="UniProtKB-UniRule"/>
</dbReference>
<dbReference type="GO" id="GO:0043335">
    <property type="term" value="P:protein unfolding"/>
    <property type="evidence" value="ECO:0007669"/>
    <property type="project" value="UniProtKB-UniRule"/>
</dbReference>
<dbReference type="GO" id="GO:0051603">
    <property type="term" value="P:proteolysis involved in protein catabolic process"/>
    <property type="evidence" value="ECO:0007669"/>
    <property type="project" value="TreeGrafter"/>
</dbReference>
<dbReference type="Gene3D" id="1.10.8.60">
    <property type="match status" value="1"/>
</dbReference>
<dbReference type="Gene3D" id="1.10.8.10">
    <property type="entry name" value="DNA helicase RuvA subunit, C-terminal domain"/>
    <property type="match status" value="1"/>
</dbReference>
<dbReference type="Gene3D" id="3.40.50.300">
    <property type="entry name" value="P-loop containing nucleotide triphosphate hydrolases"/>
    <property type="match status" value="2"/>
</dbReference>
<dbReference type="HAMAP" id="MF_00249">
    <property type="entry name" value="HslU"/>
    <property type="match status" value="1"/>
</dbReference>
<dbReference type="InterPro" id="IPR003593">
    <property type="entry name" value="AAA+_ATPase"/>
</dbReference>
<dbReference type="InterPro" id="IPR050052">
    <property type="entry name" value="ATP-dep_Clp_protease_ClpX"/>
</dbReference>
<dbReference type="InterPro" id="IPR003959">
    <property type="entry name" value="ATPase_AAA_core"/>
</dbReference>
<dbReference type="InterPro" id="IPR019489">
    <property type="entry name" value="Clp_ATPase_C"/>
</dbReference>
<dbReference type="InterPro" id="IPR004491">
    <property type="entry name" value="HslU"/>
</dbReference>
<dbReference type="InterPro" id="IPR027417">
    <property type="entry name" value="P-loop_NTPase"/>
</dbReference>
<dbReference type="NCBIfam" id="TIGR00390">
    <property type="entry name" value="hslU"/>
    <property type="match status" value="1"/>
</dbReference>
<dbReference type="NCBIfam" id="NF003544">
    <property type="entry name" value="PRK05201.1"/>
    <property type="match status" value="1"/>
</dbReference>
<dbReference type="PANTHER" id="PTHR48102">
    <property type="entry name" value="ATP-DEPENDENT CLP PROTEASE ATP-BINDING SUBUNIT CLPX-LIKE, MITOCHONDRIAL-RELATED"/>
    <property type="match status" value="1"/>
</dbReference>
<dbReference type="PANTHER" id="PTHR48102:SF3">
    <property type="entry name" value="ATP-DEPENDENT PROTEASE ATPASE SUBUNIT HSLU"/>
    <property type="match status" value="1"/>
</dbReference>
<dbReference type="Pfam" id="PF00004">
    <property type="entry name" value="AAA"/>
    <property type="match status" value="1"/>
</dbReference>
<dbReference type="Pfam" id="PF07724">
    <property type="entry name" value="AAA_2"/>
    <property type="match status" value="1"/>
</dbReference>
<dbReference type="SMART" id="SM00382">
    <property type="entry name" value="AAA"/>
    <property type="match status" value="1"/>
</dbReference>
<dbReference type="SMART" id="SM01086">
    <property type="entry name" value="ClpB_D2-small"/>
    <property type="match status" value="1"/>
</dbReference>
<dbReference type="SUPFAM" id="SSF52540">
    <property type="entry name" value="P-loop containing nucleoside triphosphate hydrolases"/>
    <property type="match status" value="1"/>
</dbReference>
<gene>
    <name evidence="1" type="primary">hslU</name>
    <name type="ordered locus">JJD26997_1337</name>
</gene>
<accession>A7H4F2</accession>
<reference key="1">
    <citation type="submission" date="2007-07" db="EMBL/GenBank/DDBJ databases">
        <title>Complete genome sequence of Campylobacter jejuni subsp doylei 269.97 isolated from human blood.</title>
        <authorList>
            <person name="Fouts D.E."/>
            <person name="Mongodin E.F."/>
            <person name="Puiu D."/>
            <person name="Sebastian Y."/>
            <person name="Miller W.G."/>
            <person name="Mandrell R.E."/>
            <person name="Lastovica A.J."/>
            <person name="Nelson K.E."/>
        </authorList>
    </citation>
    <scope>NUCLEOTIDE SEQUENCE [LARGE SCALE GENOMIC DNA]</scope>
    <source>
        <strain>ATCC BAA-1458 / RM4099 / 269.97</strain>
    </source>
</reference>